<reference key="1">
    <citation type="journal article" date="2002" name="Nature">
        <title>Complete genome sequence of the model actinomycete Streptomyces coelicolor A3(2).</title>
        <authorList>
            <person name="Bentley S.D."/>
            <person name="Chater K.F."/>
            <person name="Cerdeno-Tarraga A.-M."/>
            <person name="Challis G.L."/>
            <person name="Thomson N.R."/>
            <person name="James K.D."/>
            <person name="Harris D.E."/>
            <person name="Quail M.A."/>
            <person name="Kieser H."/>
            <person name="Harper D."/>
            <person name="Bateman A."/>
            <person name="Brown S."/>
            <person name="Chandra G."/>
            <person name="Chen C.W."/>
            <person name="Collins M."/>
            <person name="Cronin A."/>
            <person name="Fraser A."/>
            <person name="Goble A."/>
            <person name="Hidalgo J."/>
            <person name="Hornsby T."/>
            <person name="Howarth S."/>
            <person name="Huang C.-H."/>
            <person name="Kieser T."/>
            <person name="Larke L."/>
            <person name="Murphy L.D."/>
            <person name="Oliver K."/>
            <person name="O'Neil S."/>
            <person name="Rabbinowitsch E."/>
            <person name="Rajandream M.A."/>
            <person name="Rutherford K.M."/>
            <person name="Rutter S."/>
            <person name="Seeger K."/>
            <person name="Saunders D."/>
            <person name="Sharp S."/>
            <person name="Squares R."/>
            <person name="Squares S."/>
            <person name="Taylor K."/>
            <person name="Warren T."/>
            <person name="Wietzorrek A."/>
            <person name="Woodward J.R."/>
            <person name="Barrell B.G."/>
            <person name="Parkhill J."/>
            <person name="Hopwood D.A."/>
        </authorList>
    </citation>
    <scope>NUCLEOTIDE SEQUENCE [LARGE SCALE GENOMIC DNA]</scope>
    <source>
        <strain>ATCC BAA-471 / A3(2) / M145</strain>
    </source>
</reference>
<reference key="2">
    <citation type="journal article" date="1993" name="Mol. Microbiol.">
        <title>Genetic analysis of the phi C31-specific phage growth limitation (Pgl) system of Streptomyces coelicolor A3(2).</title>
        <authorList>
            <person name="Laity C."/>
            <person name="Chater K.F."/>
            <person name="Lewis C.G."/>
            <person name="Buttner M.J."/>
        </authorList>
    </citation>
    <scope>GENETIC ANALYSIS</scope>
    <scope>PHASE REVERSION</scope>
    <source>
        <strain>ATCC BAA-471 / A3(2) / M145</strain>
    </source>
</reference>
<reference key="3">
    <citation type="journal article" date="2002" name="Mol. Microbiol.">
        <title>Genetics of the phage growth limitation (Pgl) system of Streptomyces coelicolor A3(2).</title>
        <authorList>
            <person name="Sumby P."/>
            <person name="Smith M.C."/>
        </authorList>
    </citation>
    <scope>FUNCTION IN ANTIVIRAL DEFENSE</scope>
    <scope>INDUCTION</scope>
    <scope>DISRUPTION PHENOTYPE</scope>
    <source>
        <strain>ATCC BAA-471 / A3(2) / M145</strain>
    </source>
</reference>
<reference key="4">
    <citation type="journal article" date="2003" name="J. Bacteriol.">
        <title>Phase variation in the phage growth limitation system of Streptomyces coelicolor A3(2).</title>
        <authorList>
            <person name="Sumby P."/>
            <person name="Smith M.C."/>
        </authorList>
    </citation>
    <scope>INVOLVED IN PHASE VARIATION</scope>
    <source>
        <strain>ATCC BAA-471 / A3(2) / M145</strain>
    </source>
</reference>
<reference key="5">
    <citation type="journal article" date="2003" name="Nucleic Acids Res.">
        <title>A nomenclature for restriction enzymes, DNA methyltransferases, homing endonucleases and their genes.</title>
        <authorList>
            <person name="Roberts R.J."/>
            <person name="Belfort M."/>
            <person name="Bestor T."/>
            <person name="Bhagwat A.S."/>
            <person name="Bickle T.A."/>
            <person name="Bitinaite J."/>
            <person name="Blumenthal R.M."/>
            <person name="Degtyarev S.K."/>
            <person name="Dryden D.T."/>
            <person name="Dybvig K."/>
            <person name="Firman K."/>
            <person name="Gromova E.S."/>
            <person name="Gumport R.I."/>
            <person name="Halford S.E."/>
            <person name="Hattman S."/>
            <person name="Heitman J."/>
            <person name="Hornby D.P."/>
            <person name="Janulaitis A."/>
            <person name="Jeltsch A."/>
            <person name="Josephsen J."/>
            <person name="Kiss A."/>
            <person name="Klaenhammer T.R."/>
            <person name="Kobayashi I."/>
            <person name="Kong H."/>
            <person name="Krueger D.H."/>
            <person name="Lacks S."/>
            <person name="Marinus M.G."/>
            <person name="Miyahara M."/>
            <person name="Morgan R.D."/>
            <person name="Murray N.E."/>
            <person name="Nagaraja V."/>
            <person name="Piekarowicz A."/>
            <person name="Pingoud A."/>
            <person name="Raleigh E."/>
            <person name="Rao D.N."/>
            <person name="Reich N."/>
            <person name="Repin V.E."/>
            <person name="Selker E.U."/>
            <person name="Shaw P.C."/>
            <person name="Stein D.C."/>
            <person name="Stoddard B.L."/>
            <person name="Szybalski W."/>
            <person name="Trautner T.A."/>
            <person name="Van Etten J.L."/>
            <person name="Vitor J.M."/>
            <person name="Wilson G.G."/>
            <person name="Xu S.Y."/>
        </authorList>
    </citation>
    <scope>NOMENCLATURE</scope>
    <scope>SUBTYPE</scope>
</reference>
<reference key="6">
    <citation type="journal article" date="2015" name="EMBO J.">
        <title>BREX is a novel phage resistance system widespread in microbial genomes.</title>
        <authorList>
            <person name="Goldfarb T."/>
            <person name="Sberro H."/>
            <person name="Weinstock E."/>
            <person name="Cohen O."/>
            <person name="Doron S."/>
            <person name="Charpak-Amikam Y."/>
            <person name="Afik S."/>
            <person name="Ofir G."/>
            <person name="Sorek R."/>
        </authorList>
    </citation>
    <scope>CLASSIFICATION AND NOMENCLATURE</scope>
</reference>
<reference key="7">
    <citation type="journal article" date="2015" name="Virology">
        <title>The phage growth limitation system in Streptomyces coelicolor A(3)2 is a toxin/antitoxin system, comprising enzymes with DNA methyltransferase, protein kinase and ATPase activity.</title>
        <authorList>
            <person name="Hoskisson P.A."/>
            <person name="Sumby P."/>
            <person name="Smith M.C.M."/>
        </authorList>
    </citation>
    <scope>FUNCTION</scope>
    <scope>DISRUPTION PHENOTYPE</scope>
    <scope>MUTAGENESIS OF TYR-381</scope>
    <source>
        <strain>ATCC BAA-471 / A3(2) / M145</strain>
    </source>
</reference>
<proteinExistence type="evidence at protein level"/>
<feature type="chain" id="PRO_0000452165" description="Adenine-specific methyltransferase PglX">
    <location>
        <begin position="1"/>
        <end position="1210"/>
    </location>
</feature>
<feature type="region of interest" description="Disordered" evidence="1">
    <location>
        <begin position="1181"/>
        <end position="1210"/>
    </location>
</feature>
<feature type="compositionally biased region" description="Basic and acidic residues" evidence="1">
    <location>
        <begin position="1181"/>
        <end position="1194"/>
    </location>
</feature>
<feature type="compositionally biased region" description="Basic residues" evidence="1">
    <location>
        <begin position="1201"/>
        <end position="1210"/>
    </location>
</feature>
<feature type="mutagenesis site" description="Does not restore phage resistance to a deletion mutant, very little DNA methylation occurs in vitro." evidence="4">
    <original>Y</original>
    <variation>A</variation>
    <location>
        <position position="381"/>
    </location>
</feature>
<name>PGLX_STRCO</name>
<accession>Q8CJM2</accession>
<protein>
    <recommendedName>
        <fullName evidence="8">Adenine-specific methyltransferase PglX</fullName>
        <ecNumber evidence="4">2.1.1.72</ecNumber>
    </recommendedName>
    <alternativeName>
        <fullName evidence="6">Bacteriophage (PhiC31) resistance gene PglX</fullName>
    </alternativeName>
    <alternativeName>
        <fullName evidence="7">Putative type II restriction enzyme and methyltransferase RM.ScoA3ORF6627P</fullName>
        <shortName evidence="7">RM.ScoA3ORF6627P</shortName>
    </alternativeName>
</protein>
<comment type="function">
    <text evidence="2 3 4 5 10 11">BREX systems (bacteriophage exclusion) provide immunity against bacteriophage. Part of a type 2 BREX system (Probable). Probably a DNA methyltransferase, it methylates phage DNA in vitro in an S-adenosyl-L-methionine-dependent manner (PubMed:25592393). Previously called the phage growth limitation (Pgl) system, it confers protection against bacteriophage phiC31. The bacteria allows one cycle of phage infection, but subsequent cycles are impaired, protecting the original bacterial colony (Probable). The system undergoes high rates (10(-3) to 10(-4)) of phase reversion, i.e. loss and regain of phiC31 resistance (PubMed:12867465, PubMed:8446035). When the pglW-pglX-pglY-pglZ genes are transformed into a susceptible S.lividans (strain 1326) they confer resistance to infection by phage phiC31 and phiBT1; all 4 genes are necessary (PubMed:11972785).</text>
</comment>
<comment type="function">
    <text evidence="4">Probably a toxic component of a type II toxin-antitoxin (TA) system. The toxic activity is inhibited by its cognate antitoxin PglZ.</text>
</comment>
<comment type="function">
    <text evidence="7">May be a subtypes G and alpha restriction enzyme that recognizes and cleaves an unknown sequence. Methylates an adenine residue in the same sequence.</text>
</comment>
<comment type="catalytic activity">
    <reaction evidence="12">
        <text>a 2'-deoxyadenosine in DNA + S-adenosyl-L-methionine = an N(6)-methyl-2'-deoxyadenosine in DNA + S-adenosyl-L-homocysteine + H(+)</text>
        <dbReference type="Rhea" id="RHEA:15197"/>
        <dbReference type="Rhea" id="RHEA-COMP:12418"/>
        <dbReference type="Rhea" id="RHEA-COMP:12419"/>
        <dbReference type="ChEBI" id="CHEBI:15378"/>
        <dbReference type="ChEBI" id="CHEBI:57856"/>
        <dbReference type="ChEBI" id="CHEBI:59789"/>
        <dbReference type="ChEBI" id="CHEBI:90615"/>
        <dbReference type="ChEBI" id="CHEBI:90616"/>
        <dbReference type="EC" id="2.1.1.72"/>
    </reaction>
</comment>
<comment type="induction">
    <text evidence="2">Constitutively expressed, probably part of a pglW-pglX operon.</text>
</comment>
<comment type="disruption phenotype">
    <text evidence="2 4">Strain is no longer resistant to plaque formation by bacteriophage phiC31 (a Pgl- phenotype).</text>
</comment>
<comment type="miscellaneous">
    <text evidence="3">Phase reversion of this Pgl system is due in part to the expansion and contraction of an 8-base long guanine tract in this protein (corresponding to residues 259-263). The tract has been observed to be 7, 8 and 9 nucleotides long in different derivatives; a 7-G tract yields a 282 residue and the 9-G tract a 336 residue missense protein.</text>
</comment>
<comment type="similarity">
    <text evidence="9">Belongs to the methyltransferase superfamily. PglX adenine methyltransferase family.</text>
</comment>
<evidence type="ECO:0000256" key="1">
    <source>
        <dbReference type="SAM" id="MobiDB-lite"/>
    </source>
</evidence>
<evidence type="ECO:0000269" key="2">
    <source>
    </source>
</evidence>
<evidence type="ECO:0000269" key="3">
    <source>
    </source>
</evidence>
<evidence type="ECO:0000269" key="4">
    <source>
    </source>
</evidence>
<evidence type="ECO:0000269" key="5">
    <source>
    </source>
</evidence>
<evidence type="ECO:0000303" key="6">
    <source>
    </source>
</evidence>
<evidence type="ECO:0000303" key="7">
    <source>
    </source>
</evidence>
<evidence type="ECO:0000303" key="8">
    <source>
    </source>
</evidence>
<evidence type="ECO:0000305" key="9"/>
<evidence type="ECO:0000305" key="10">
    <source>
    </source>
</evidence>
<evidence type="ECO:0000305" key="11">
    <source>
    </source>
</evidence>
<evidence type="ECO:0000305" key="12">
    <source>
    </source>
</evidence>
<organism>
    <name type="scientific">Streptomyces coelicolor (strain ATCC BAA-471 / A3(2) / M145)</name>
    <dbReference type="NCBI Taxonomy" id="100226"/>
    <lineage>
        <taxon>Bacteria</taxon>
        <taxon>Bacillati</taxon>
        <taxon>Actinomycetota</taxon>
        <taxon>Actinomycetes</taxon>
        <taxon>Kitasatosporales</taxon>
        <taxon>Streptomycetaceae</taxon>
        <taxon>Streptomyces</taxon>
        <taxon>Streptomyces albidoflavus group</taxon>
    </lineage>
</organism>
<dbReference type="EC" id="2.1.1.72" evidence="4"/>
<dbReference type="EMBL" id="AL939128">
    <property type="protein sequence ID" value="CAD55384.1"/>
    <property type="molecule type" value="Genomic_DNA"/>
</dbReference>
<dbReference type="PIR" id="T29133">
    <property type="entry name" value="T29133"/>
</dbReference>
<dbReference type="PIR" id="T35036">
    <property type="entry name" value="T35036"/>
</dbReference>
<dbReference type="RefSeq" id="NP_733709.1">
    <property type="nucleotide sequence ID" value="NC_003888.3"/>
</dbReference>
<dbReference type="RefSeq" id="WP_011031053.1">
    <property type="nucleotide sequence ID" value="NZ_VNID01000002.1"/>
</dbReference>
<dbReference type="STRING" id="100226.gene:17764285"/>
<dbReference type="REBASE" id="17310">
    <property type="entry name" value="ScoA3ORF6627P"/>
</dbReference>
<dbReference type="PaxDb" id="100226-SCO6627"/>
<dbReference type="KEGG" id="sco:SCO6627"/>
<dbReference type="PATRIC" id="fig|100226.15.peg.6735"/>
<dbReference type="eggNOG" id="COG1002">
    <property type="taxonomic scope" value="Bacteria"/>
</dbReference>
<dbReference type="HOGENOM" id="CLU_269467_0_0_11"/>
<dbReference type="InParanoid" id="Q8CJM2"/>
<dbReference type="OrthoDB" id="4280289at2"/>
<dbReference type="PhylomeDB" id="Q8CJM2"/>
<dbReference type="Proteomes" id="UP000001973">
    <property type="component" value="Chromosome"/>
</dbReference>
<dbReference type="GO" id="GO:0003677">
    <property type="term" value="F:DNA binding"/>
    <property type="evidence" value="ECO:0007669"/>
    <property type="project" value="UniProtKB-KW"/>
</dbReference>
<dbReference type="GO" id="GO:0009007">
    <property type="term" value="F:site-specific DNA-methyltransferase (adenine-specific) activity"/>
    <property type="evidence" value="ECO:0007669"/>
    <property type="project" value="UniProtKB-EC"/>
</dbReference>
<dbReference type="GO" id="GO:0051607">
    <property type="term" value="P:defense response to virus"/>
    <property type="evidence" value="ECO:0007669"/>
    <property type="project" value="UniProtKB-KW"/>
</dbReference>
<dbReference type="GO" id="GO:0006304">
    <property type="term" value="P:DNA modification"/>
    <property type="evidence" value="ECO:0007669"/>
    <property type="project" value="InterPro"/>
</dbReference>
<dbReference type="GO" id="GO:0032259">
    <property type="term" value="P:methylation"/>
    <property type="evidence" value="ECO:0007669"/>
    <property type="project" value="UniProtKB-KW"/>
</dbReference>
<dbReference type="Gene3D" id="3.40.50.150">
    <property type="entry name" value="Vaccinia Virus protein VP39"/>
    <property type="match status" value="1"/>
</dbReference>
<dbReference type="InterPro" id="IPR002052">
    <property type="entry name" value="DNA_methylase_N6_adenine_CS"/>
</dbReference>
<dbReference type="InterPro" id="IPR054277">
    <property type="entry name" value="DUF7008"/>
</dbReference>
<dbReference type="InterPro" id="IPR011639">
    <property type="entry name" value="MethylTrfase_TaqI-like_dom"/>
</dbReference>
<dbReference type="InterPro" id="IPR050953">
    <property type="entry name" value="N4_N6_ade-DNA_methylase"/>
</dbReference>
<dbReference type="InterPro" id="IPR029063">
    <property type="entry name" value="SAM-dependent_MTases_sf"/>
</dbReference>
<dbReference type="NCBIfam" id="NF033451">
    <property type="entry name" value="BREX_2_MTaseX"/>
    <property type="match status" value="1"/>
</dbReference>
<dbReference type="PANTHER" id="PTHR33841:SF1">
    <property type="entry name" value="DNA METHYLTRANSFERASE A"/>
    <property type="match status" value="1"/>
</dbReference>
<dbReference type="PANTHER" id="PTHR33841">
    <property type="entry name" value="DNA METHYLTRANSFERASE YEEA-RELATED"/>
    <property type="match status" value="1"/>
</dbReference>
<dbReference type="Pfam" id="PF22654">
    <property type="entry name" value="DUF7008"/>
    <property type="match status" value="1"/>
</dbReference>
<dbReference type="Pfam" id="PF07669">
    <property type="entry name" value="Eco57I"/>
    <property type="match status" value="1"/>
</dbReference>
<dbReference type="SUPFAM" id="SSF53335">
    <property type="entry name" value="S-adenosyl-L-methionine-dependent methyltransferases"/>
    <property type="match status" value="1"/>
</dbReference>
<dbReference type="PROSITE" id="PS00092">
    <property type="entry name" value="N6_MTASE"/>
    <property type="match status" value="1"/>
</dbReference>
<gene>
    <name evidence="6" type="primary">pglX</name>
    <name type="synonym">SC1F2.24</name>
    <name type="ordered locus">SCO6627</name>
</gene>
<sequence>MIDRKALLNDLKQQVKAVEADLGKQVKALDEVGARLRAEYDQARKLGRTAATWNSWLDERVTQVAVAWVLGTVFVRFCEDNRLIPEPYVTGPDNYRRDLAETRYDVYVEADDDPTYRGWLRRAFAELGDGQAGRLLFDSDHNPLYQIPLSHDGARELVEFWRQRDEEGALVHDFTDPLSADGTEGWGTRFLGDLYQDLSEAARKTYALLQTPEFVEEFILDRTMNPAVREFGYEELKMIDPTCGSGHFVLGAFRRLVRLGGENQPGKDVHQRVRAALDSVHGVDINPFAVAIARFRLLVAAMAASGVRTLDEASKYEWPVHLAVGDSLIKSGSQQGSLFGESDDDLTDELAEFKYATEDVGEHPEMLRPGRYHVVVGNPPYITVKDKSLNALYRELYPACAGKYALSVPFAQRFFELAKREDAEGSGYGMVGQITANSFMKREFGTKLIEGYFGHAVELTEVIDTSGAYIPGHGTPTVILVGTRRGGDGRSPVIRTVRSVQGEPVAPENAEEGLVWRAIVEQIDKPGSVSQWVSVDDLDREKYFSKQPWVLADGGQEMLEQINAASHAILKRDLHRIGFYGIMGADDAMSAVPRTFRRNNAESEYVRRLVVGDEVRDFRIADGDDAFHPYGSQRDLVGPDAFPNLAAWLWPYRTELGGRATFSGGTYFADGRPWWEWHQLPKDVGAHAWSLNFAFVATHNHVVLDRSGCAFTRTAPVIKLREGASEEEHLRLLGLLNSSTAGFWLKMVSYPKGGDPVGDEGARVSVHPWSDRYEFTGTKLQEFPLPSEYPTGLGTALDALAQRLAAASPAAVAAEAVPIAGLLREARTRWEAIRSRMIALQEEMDWQVYSLYKLHSEDLRVSEDPDDTNIPELTLGGRAFEIVLARRVAAGEASDEWFKRHNSTPITEIPAHWPAPYREIVQKRIDAIESNRAIGMVERPEYKRRWATEGWDALQEKALRSWLLDRMENRDLWCDENGQPTILTLARLTDALSRDEDFASVAKLYAPRKELAKVVAELITDEHVPFLSALRYKPSGLKKRADWEEVWDLQRKEDAAPDEPAKRKIRDSIPVPPKYTSADFLRPSYWKARGKLDVPKERFVSYGQTNAATPELYGWAGWDHREQAQALATYFTNTALSTKEITPFLAGLLELQPWLSQWHNEFDMLYSGSPADFFAGYRQQKQGEHGLTDDDLRGWRPPAATRRRRAAAKQ</sequence>
<keyword id="KW-0051">Antiviral defense</keyword>
<keyword id="KW-0238">DNA-binding</keyword>
<keyword id="KW-0489">Methyltransferase</keyword>
<keyword id="KW-1185">Reference proteome</keyword>
<keyword id="KW-0949">S-adenosyl-L-methionine</keyword>
<keyword id="KW-1277">Toxin-antitoxin system</keyword>
<keyword id="KW-0808">Transferase</keyword>